<protein>
    <recommendedName>
        <fullName evidence="1">Photosystem II reaction center protein X</fullName>
    </recommendedName>
</protein>
<evidence type="ECO:0000255" key="1">
    <source>
        <dbReference type="HAMAP-Rule" id="MF_01386"/>
    </source>
</evidence>
<proteinExistence type="inferred from homology"/>
<feature type="chain" id="PRO_0000345380" description="Photosystem II reaction center protein X">
    <location>
        <begin position="1"/>
        <end position="38"/>
    </location>
</feature>
<feature type="transmembrane region" description="Helical" evidence="1">
    <location>
        <begin position="8"/>
        <end position="28"/>
    </location>
</feature>
<gene>
    <name evidence="1" type="primary">psbX</name>
    <name type="ordered locus">CYB_0812</name>
</gene>
<dbReference type="EMBL" id="CP000240">
    <property type="protein sequence ID" value="ABD01793.1"/>
    <property type="molecule type" value="Genomic_DNA"/>
</dbReference>
<dbReference type="RefSeq" id="WP_011432450.1">
    <property type="nucleotide sequence ID" value="NC_007776.1"/>
</dbReference>
<dbReference type="SMR" id="Q2JN82"/>
<dbReference type="STRING" id="321332.CYB_0812"/>
<dbReference type="KEGG" id="cyb:CYB_0812"/>
<dbReference type="eggNOG" id="ENOG5030Y19">
    <property type="taxonomic scope" value="Bacteria"/>
</dbReference>
<dbReference type="HOGENOM" id="CLU_212837_0_1_3"/>
<dbReference type="Proteomes" id="UP000001938">
    <property type="component" value="Chromosome"/>
</dbReference>
<dbReference type="GO" id="GO:0009523">
    <property type="term" value="C:photosystem II"/>
    <property type="evidence" value="ECO:0007669"/>
    <property type="project" value="UniProtKB-KW"/>
</dbReference>
<dbReference type="GO" id="GO:0031676">
    <property type="term" value="C:plasma membrane-derived thylakoid membrane"/>
    <property type="evidence" value="ECO:0007669"/>
    <property type="project" value="UniProtKB-SubCell"/>
</dbReference>
<dbReference type="GO" id="GO:0015979">
    <property type="term" value="P:photosynthesis"/>
    <property type="evidence" value="ECO:0007669"/>
    <property type="project" value="UniProtKB-UniRule"/>
</dbReference>
<dbReference type="Gene3D" id="1.20.5.510">
    <property type="entry name" value="Single helix bin"/>
    <property type="match status" value="1"/>
</dbReference>
<dbReference type="HAMAP" id="MF_01386">
    <property type="entry name" value="PSII_PsbX_1"/>
    <property type="match status" value="1"/>
</dbReference>
<dbReference type="InterPro" id="IPR009518">
    <property type="entry name" value="PSII_PsbX"/>
</dbReference>
<dbReference type="InterPro" id="IPR023431">
    <property type="entry name" value="PSII_PsbX_type_1_subfam"/>
</dbReference>
<dbReference type="Pfam" id="PF06596">
    <property type="entry name" value="PsbX"/>
    <property type="match status" value="1"/>
</dbReference>
<organism>
    <name type="scientific">Synechococcus sp. (strain JA-2-3B'a(2-13))</name>
    <name type="common">Cyanobacteria bacterium Yellowstone B-Prime</name>
    <dbReference type="NCBI Taxonomy" id="321332"/>
    <lineage>
        <taxon>Bacteria</taxon>
        <taxon>Bacillati</taxon>
        <taxon>Cyanobacteriota</taxon>
        <taxon>Cyanophyceae</taxon>
        <taxon>Synechococcales</taxon>
        <taxon>Synechococcaceae</taxon>
        <taxon>Synechococcus</taxon>
    </lineage>
</organism>
<comment type="function">
    <text evidence="1">Involved in the binding and/or turnover of quinones at the Q(B) site of photosystem II (PSII). PSII is a light-driven water plastoquinone oxidoreductase, using light energy to abstract electrons from H(2)O, generating a proton gradient subsequently used for ATP formation.</text>
</comment>
<comment type="subunit">
    <text evidence="1">PSII is composed of 1 copy each of membrane proteins PsbA, PsbB, PsbC, PsbD, PsbE, PsbF, PsbH, PsbI, PsbJ, PsbK, PsbL, PsbM, PsbT, PsbX, PsbY, PsbZ, Psb30/Ycf12, peripheral proteins PsbO, CyanoQ (PsbQ), PsbU, PsbV and a large number of cofactors. It forms dimeric complexes.</text>
</comment>
<comment type="subcellular location">
    <subcellularLocation>
        <location evidence="1">Cellular thylakoid membrane</location>
        <topology evidence="1">Single-pass membrane protein</topology>
    </subcellularLocation>
</comment>
<comment type="similarity">
    <text evidence="1">Belongs to the PsbX family. Type 1 subfamily.</text>
</comment>
<name>PSBX_SYNJB</name>
<sequence>MTPSLANFLWSLVAGAVVLGALFGAIIFVSQRDKVRRR</sequence>
<keyword id="KW-0472">Membrane</keyword>
<keyword id="KW-0602">Photosynthesis</keyword>
<keyword id="KW-0604">Photosystem II</keyword>
<keyword id="KW-1185">Reference proteome</keyword>
<keyword id="KW-0793">Thylakoid</keyword>
<keyword id="KW-0812">Transmembrane</keyword>
<keyword id="KW-1133">Transmembrane helix</keyword>
<accession>Q2JN82</accession>
<reference key="1">
    <citation type="journal article" date="2007" name="ISME J.">
        <title>Population level functional diversity in a microbial community revealed by comparative genomic and metagenomic analyses.</title>
        <authorList>
            <person name="Bhaya D."/>
            <person name="Grossman A.R."/>
            <person name="Steunou A.-S."/>
            <person name="Khuri N."/>
            <person name="Cohan F.M."/>
            <person name="Hamamura N."/>
            <person name="Melendrez M.C."/>
            <person name="Bateson M.M."/>
            <person name="Ward D.M."/>
            <person name="Heidelberg J.F."/>
        </authorList>
    </citation>
    <scope>NUCLEOTIDE SEQUENCE [LARGE SCALE GENOMIC DNA]</scope>
    <source>
        <strain>JA-2-3B'a(2-13)</strain>
    </source>
</reference>